<sequence length="127" mass="14239">MTQSVPPGDIQTQPGTKIVFNAPYDDKHTYHIKVINSSARRIGYGIKTTNMKRLGVDPPCGVLDPKEAVLLAVSCDAFAFGQEDTNNDRITVEWTNTPDGAAKQFRREWFQGDGMVRRKNLPIEYNP</sequence>
<dbReference type="EMBL" id="FO081669">
    <property type="protein sequence ID" value="CCD73220.1"/>
    <property type="molecule type" value="Genomic_DNA"/>
</dbReference>
<dbReference type="PIR" id="A88139">
    <property type="entry name" value="A88139"/>
</dbReference>
<dbReference type="RefSeq" id="NP_494901.1">
    <property type="nucleotide sequence ID" value="NM_062500.10"/>
</dbReference>
<dbReference type="SMR" id="Q23519"/>
<dbReference type="FunCoup" id="Q23519">
    <property type="interactions" value="12"/>
</dbReference>
<dbReference type="STRING" id="6239.ZK546.6.1"/>
<dbReference type="PaxDb" id="6239-ZK546.6"/>
<dbReference type="PeptideAtlas" id="Q23519"/>
<dbReference type="EnsemblMetazoa" id="ZK546.6.1">
    <property type="protein sequence ID" value="ZK546.6.1"/>
    <property type="gene ID" value="WBGene00003470"/>
</dbReference>
<dbReference type="GeneID" id="191712"/>
<dbReference type="KEGG" id="cel:CELE_ZK546.6"/>
<dbReference type="UCSC" id="ZK546.6">
    <property type="organism name" value="c. elegans"/>
</dbReference>
<dbReference type="AGR" id="WB:WBGene00003470"/>
<dbReference type="CTD" id="191712"/>
<dbReference type="WormBase" id="ZK546.6">
    <property type="protein sequence ID" value="CE02920"/>
    <property type="gene ID" value="WBGene00003470"/>
    <property type="gene designation" value="msp-152"/>
</dbReference>
<dbReference type="eggNOG" id="ENOG502RXF6">
    <property type="taxonomic scope" value="Eukaryota"/>
</dbReference>
<dbReference type="GeneTree" id="ENSGT00970000195833"/>
<dbReference type="HOGENOM" id="CLU_120664_0_1_1"/>
<dbReference type="InParanoid" id="Q23519"/>
<dbReference type="OrthoDB" id="5918453at2759"/>
<dbReference type="PhylomeDB" id="Q23519"/>
<dbReference type="PRO" id="PR:Q23519"/>
<dbReference type="Proteomes" id="UP000001940">
    <property type="component" value="Chromosome II"/>
</dbReference>
<dbReference type="Bgee" id="WBGene00003470">
    <property type="expression patterns" value="Expressed in adult organism and 2 other cell types or tissues"/>
</dbReference>
<dbReference type="GO" id="GO:0005737">
    <property type="term" value="C:cytoplasm"/>
    <property type="evidence" value="ECO:0007669"/>
    <property type="project" value="UniProtKB-KW"/>
</dbReference>
<dbReference type="GO" id="GO:0005856">
    <property type="term" value="C:cytoskeleton"/>
    <property type="evidence" value="ECO:0007669"/>
    <property type="project" value="UniProtKB-SubCell"/>
</dbReference>
<dbReference type="GO" id="GO:0031143">
    <property type="term" value="C:pseudopodium"/>
    <property type="evidence" value="ECO:0007669"/>
    <property type="project" value="UniProtKB-SubCell"/>
</dbReference>
<dbReference type="FunFam" id="2.60.40.10:FF:001120">
    <property type="entry name" value="Major sperm protein 19/31/40/45/50/51/53/59/61/65/81/113/142"/>
    <property type="match status" value="1"/>
</dbReference>
<dbReference type="Gene3D" id="2.60.40.10">
    <property type="entry name" value="Immunoglobulins"/>
    <property type="match status" value="1"/>
</dbReference>
<dbReference type="InterPro" id="IPR013783">
    <property type="entry name" value="Ig-like_fold"/>
</dbReference>
<dbReference type="InterPro" id="IPR000535">
    <property type="entry name" value="MSP_dom"/>
</dbReference>
<dbReference type="InterPro" id="IPR051155">
    <property type="entry name" value="Nematode_MSP"/>
</dbReference>
<dbReference type="InterPro" id="IPR008962">
    <property type="entry name" value="PapD-like_sf"/>
</dbReference>
<dbReference type="PANTHER" id="PTHR22920">
    <property type="entry name" value="MAJOR SPERM PROTEIN"/>
    <property type="match status" value="1"/>
</dbReference>
<dbReference type="PANTHER" id="PTHR22920:SF7">
    <property type="entry name" value="MSP DOMAIN-CONTAINING PROTEIN-RELATED"/>
    <property type="match status" value="1"/>
</dbReference>
<dbReference type="Pfam" id="PF00635">
    <property type="entry name" value="Motile_Sperm"/>
    <property type="match status" value="1"/>
</dbReference>
<dbReference type="SUPFAM" id="SSF49354">
    <property type="entry name" value="PapD-like"/>
    <property type="match status" value="1"/>
</dbReference>
<dbReference type="PROSITE" id="PS50202">
    <property type="entry name" value="MSP"/>
    <property type="match status" value="1"/>
</dbReference>
<protein>
    <recommendedName>
        <fullName>Major sperm protein 152</fullName>
        <shortName>MSP</shortName>
    </recommendedName>
</protein>
<organism>
    <name type="scientific">Caenorhabditis elegans</name>
    <dbReference type="NCBI Taxonomy" id="6239"/>
    <lineage>
        <taxon>Eukaryota</taxon>
        <taxon>Metazoa</taxon>
        <taxon>Ecdysozoa</taxon>
        <taxon>Nematoda</taxon>
        <taxon>Chromadorea</taxon>
        <taxon>Rhabditida</taxon>
        <taxon>Rhabditina</taxon>
        <taxon>Rhabditomorpha</taxon>
        <taxon>Rhabditoidea</taxon>
        <taxon>Rhabditidae</taxon>
        <taxon>Peloderinae</taxon>
        <taxon>Caenorhabditis</taxon>
    </lineage>
</organism>
<proteinExistence type="evidence at transcript level"/>
<evidence type="ECO:0000250" key="1"/>
<evidence type="ECO:0000255" key="2">
    <source>
        <dbReference type="PROSITE-ProRule" id="PRU00132"/>
    </source>
</evidence>
<name>MS152_CAEEL</name>
<reference key="1">
    <citation type="journal article" date="1998" name="Science">
        <title>Genome sequence of the nematode C. elegans: a platform for investigating biology.</title>
        <authorList>
            <consortium name="The C. elegans sequencing consortium"/>
        </authorList>
    </citation>
    <scope>NUCLEOTIDE SEQUENCE [LARGE SCALE GENOMIC DNA]</scope>
    <source>
        <strain>Bristol N2</strain>
    </source>
</reference>
<keyword id="KW-0007">Acetylation</keyword>
<keyword id="KW-0966">Cell projection</keyword>
<keyword id="KW-0963">Cytoplasm</keyword>
<keyword id="KW-0206">Cytoskeleton</keyword>
<keyword id="KW-1185">Reference proteome</keyword>
<accession>Q23519</accession>
<feature type="initiator methionine" description="Removed" evidence="1">
    <location>
        <position position="1"/>
    </location>
</feature>
<feature type="chain" id="PRO_0000213446" description="Major sperm protein 152">
    <location>
        <begin position="2"/>
        <end position="127"/>
    </location>
</feature>
<feature type="domain" description="MSP" evidence="2">
    <location>
        <begin position="9"/>
        <end position="126"/>
    </location>
</feature>
<feature type="modified residue" description="N-acetylthreonine" evidence="1">
    <location>
        <position position="2"/>
    </location>
</feature>
<comment type="function">
    <text>Central component in molecular interactions underlying sperm crawling. Forms an extensive filament system that extends from sperm villipoda, along the leading edge of the pseudopod.</text>
</comment>
<comment type="subcellular location">
    <subcellularLocation>
        <location>Cell projection</location>
        <location>Pseudopodium</location>
    </subcellularLocation>
    <subcellularLocation>
        <location>Cytoplasm</location>
        <location>Cytoskeleton</location>
    </subcellularLocation>
</comment>
<comment type="tissue specificity">
    <text>Sperm.</text>
</comment>
<comment type="miscellaneous">
    <text>Around 30 MSP isoforms may exist in C.elegans.</text>
</comment>
<gene>
    <name type="primary">msp-152</name>
    <name type="ORF">ZK546.6</name>
</gene>